<dbReference type="EMBL" id="CP000815">
    <property type="protein sequence ID" value="ACB42498.1"/>
    <property type="molecule type" value="Genomic_DNA"/>
</dbReference>
<dbReference type="RefSeq" id="YP_002048708.1">
    <property type="nucleotide sequence ID" value="NC_011087.1"/>
</dbReference>
<dbReference type="SMR" id="B1X3H9"/>
<dbReference type="GeneID" id="6481360"/>
<dbReference type="GO" id="GO:0070111">
    <property type="term" value="C:organellar chromatophore"/>
    <property type="evidence" value="ECO:0007669"/>
    <property type="project" value="UniProtKB-SubCell"/>
</dbReference>
<dbReference type="GO" id="GO:0009536">
    <property type="term" value="C:plastid"/>
    <property type="evidence" value="ECO:0007669"/>
    <property type="project" value="UniProtKB-KW"/>
</dbReference>
<dbReference type="GO" id="GO:1990904">
    <property type="term" value="C:ribonucleoprotein complex"/>
    <property type="evidence" value="ECO:0007669"/>
    <property type="project" value="UniProtKB-KW"/>
</dbReference>
<dbReference type="GO" id="GO:0005840">
    <property type="term" value="C:ribosome"/>
    <property type="evidence" value="ECO:0007669"/>
    <property type="project" value="UniProtKB-KW"/>
</dbReference>
<dbReference type="GO" id="GO:0003735">
    <property type="term" value="F:structural constituent of ribosome"/>
    <property type="evidence" value="ECO:0007669"/>
    <property type="project" value="InterPro"/>
</dbReference>
<dbReference type="GO" id="GO:0006412">
    <property type="term" value="P:translation"/>
    <property type="evidence" value="ECO:0007669"/>
    <property type="project" value="InterPro"/>
</dbReference>
<dbReference type="Gene3D" id="2.20.28.120">
    <property type="entry name" value="Ribosomal protein L33"/>
    <property type="match status" value="1"/>
</dbReference>
<dbReference type="HAMAP" id="MF_00294">
    <property type="entry name" value="Ribosomal_bL33"/>
    <property type="match status" value="1"/>
</dbReference>
<dbReference type="InterPro" id="IPR001705">
    <property type="entry name" value="Ribosomal_bL33"/>
</dbReference>
<dbReference type="InterPro" id="IPR018264">
    <property type="entry name" value="Ribosomal_bL33_CS"/>
</dbReference>
<dbReference type="InterPro" id="IPR038584">
    <property type="entry name" value="Ribosomal_bL33_sf"/>
</dbReference>
<dbReference type="InterPro" id="IPR011332">
    <property type="entry name" value="Ribosomal_zn-bd"/>
</dbReference>
<dbReference type="NCBIfam" id="NF001764">
    <property type="entry name" value="PRK00504.1"/>
    <property type="match status" value="1"/>
</dbReference>
<dbReference type="NCBIfam" id="NF001860">
    <property type="entry name" value="PRK00595.1"/>
    <property type="match status" value="1"/>
</dbReference>
<dbReference type="NCBIfam" id="TIGR01023">
    <property type="entry name" value="rpmG_bact"/>
    <property type="match status" value="1"/>
</dbReference>
<dbReference type="PANTHER" id="PTHR43168">
    <property type="entry name" value="50S RIBOSOMAL PROTEIN L33, CHLOROPLASTIC"/>
    <property type="match status" value="1"/>
</dbReference>
<dbReference type="PANTHER" id="PTHR43168:SF2">
    <property type="entry name" value="LARGE RIBOSOMAL SUBUNIT PROTEIN BL33C"/>
    <property type="match status" value="1"/>
</dbReference>
<dbReference type="Pfam" id="PF00471">
    <property type="entry name" value="Ribosomal_L33"/>
    <property type="match status" value="1"/>
</dbReference>
<dbReference type="SUPFAM" id="SSF57829">
    <property type="entry name" value="Zn-binding ribosomal proteins"/>
    <property type="match status" value="1"/>
</dbReference>
<dbReference type="PROSITE" id="PS00582">
    <property type="entry name" value="RIBOSOMAL_L33"/>
    <property type="match status" value="1"/>
</dbReference>
<accession>B1X3H9</accession>
<comment type="subcellular location">
    <subcellularLocation>
        <location>Plastid</location>
        <location>Organellar chromatophore</location>
    </subcellularLocation>
</comment>
<comment type="similarity">
    <text evidence="1">Belongs to the bacterial ribosomal protein bL33 family.</text>
</comment>
<proteinExistence type="inferred from homology"/>
<organism>
    <name type="scientific">Paulinella chromatophora</name>
    <dbReference type="NCBI Taxonomy" id="39717"/>
    <lineage>
        <taxon>Eukaryota</taxon>
        <taxon>Sar</taxon>
        <taxon>Rhizaria</taxon>
        <taxon>Cercozoa</taxon>
        <taxon>Imbricatea</taxon>
        <taxon>Silicofilosea</taxon>
        <taxon>Euglyphida</taxon>
        <taxon>Paulinellidae</taxon>
        <taxon>Paulinella</taxon>
    </lineage>
</organism>
<sequence length="64" mass="7392">MAKNKGVRLVITLECTECRSNSAKRSPGVSRYTTEKNRRNTTERLEIKKFCPHCNKSAIHKEIK</sequence>
<evidence type="ECO:0000255" key="1">
    <source>
        <dbReference type="HAMAP-Rule" id="MF_00294"/>
    </source>
</evidence>
<evidence type="ECO:0000305" key="2"/>
<keyword id="KW-0994">Organellar chromatophore</keyword>
<keyword id="KW-0934">Plastid</keyword>
<keyword id="KW-0687">Ribonucleoprotein</keyword>
<keyword id="KW-0689">Ribosomal protein</keyword>
<reference key="1">
    <citation type="journal article" date="2008" name="Curr. Biol.">
        <title>Chromatophore genome sequence of Paulinella sheds light on acquisition of photosynthesis by eukaryotes.</title>
        <authorList>
            <person name="Nowack E.C.M."/>
            <person name="Melkonian M."/>
            <person name="Gloeckner G."/>
        </authorList>
    </citation>
    <scope>NUCLEOTIDE SEQUENCE [LARGE SCALE GENOMIC DNA]</scope>
</reference>
<gene>
    <name evidence="1" type="primary">rpl33</name>
    <name type="ordered locus">PCC_0038</name>
</gene>
<protein>
    <recommendedName>
        <fullName evidence="1">Large ribosomal subunit protein bL33c</fullName>
    </recommendedName>
    <alternativeName>
        <fullName evidence="2">50S ribosomal protein L33, organellar chromatophore</fullName>
    </alternativeName>
</protein>
<feature type="chain" id="PRO_0000356824" description="Large ribosomal subunit protein bL33c">
    <location>
        <begin position="1"/>
        <end position="64"/>
    </location>
</feature>
<name>RK33_PAUCH</name>
<geneLocation type="organellar chromatophore"/>